<feature type="chain" id="PRO_1000089930" description="Phosphate acyltransferase">
    <location>
        <begin position="1"/>
        <end position="348"/>
    </location>
</feature>
<sequence length="348" mass="37310">MIRISLDLMGGDFGPQVVIPGAAKALDRHPDISFVFYGLKEQCDPVLAKFPKLKEKSVFHDCELAVSMSEKPSQALRRGRYISTMWRSIEAVKTGEADVAVSAGNTGALMAMAKFCLRTMANIERPAIAAIWPTLKGESIVLDVGATIGADAQQLMDFALMGGAMARALFEVERPTVGLLNVGVEEMKGQEEVKEAGRLLREANIDSLEYSGFVEGNDLGKGTVDVVVTEGFSGNIALKTAEGTAKQIGEYLRAAMSRTLLARIGYLFAKSAFDMLREKLDPSKVNGGVFLGLNGIVIKSHGGANAEGIAAAIEVGYDMAKNGLNQKIENDLKKYHAKRLPPMGPEAA</sequence>
<dbReference type="EC" id="2.3.1.274" evidence="1"/>
<dbReference type="EMBL" id="CP001191">
    <property type="protein sequence ID" value="ACI54490.1"/>
    <property type="molecule type" value="Genomic_DNA"/>
</dbReference>
<dbReference type="RefSeq" id="WP_012557284.1">
    <property type="nucleotide sequence ID" value="NC_011369.1"/>
</dbReference>
<dbReference type="SMR" id="B5ZXV7"/>
<dbReference type="STRING" id="395492.Rleg2_1196"/>
<dbReference type="KEGG" id="rlt:Rleg2_1196"/>
<dbReference type="eggNOG" id="COG0416">
    <property type="taxonomic scope" value="Bacteria"/>
</dbReference>
<dbReference type="HOGENOM" id="CLU_039379_1_0_5"/>
<dbReference type="UniPathway" id="UPA00085"/>
<dbReference type="Proteomes" id="UP000008330">
    <property type="component" value="Chromosome"/>
</dbReference>
<dbReference type="GO" id="GO:0005737">
    <property type="term" value="C:cytoplasm"/>
    <property type="evidence" value="ECO:0007669"/>
    <property type="project" value="UniProtKB-SubCell"/>
</dbReference>
<dbReference type="GO" id="GO:0043811">
    <property type="term" value="F:phosphate:acyl-[acyl carrier protein] acyltransferase activity"/>
    <property type="evidence" value="ECO:0007669"/>
    <property type="project" value="UniProtKB-UniRule"/>
</dbReference>
<dbReference type="GO" id="GO:0006633">
    <property type="term" value="P:fatty acid biosynthetic process"/>
    <property type="evidence" value="ECO:0007669"/>
    <property type="project" value="UniProtKB-UniRule"/>
</dbReference>
<dbReference type="GO" id="GO:0008654">
    <property type="term" value="P:phospholipid biosynthetic process"/>
    <property type="evidence" value="ECO:0007669"/>
    <property type="project" value="UniProtKB-KW"/>
</dbReference>
<dbReference type="Gene3D" id="3.40.718.10">
    <property type="entry name" value="Isopropylmalate Dehydrogenase"/>
    <property type="match status" value="1"/>
</dbReference>
<dbReference type="HAMAP" id="MF_00019">
    <property type="entry name" value="PlsX"/>
    <property type="match status" value="1"/>
</dbReference>
<dbReference type="InterPro" id="IPR003664">
    <property type="entry name" value="FA_synthesis"/>
</dbReference>
<dbReference type="InterPro" id="IPR012281">
    <property type="entry name" value="Phospholipid_synth_PlsX-like"/>
</dbReference>
<dbReference type="NCBIfam" id="TIGR00182">
    <property type="entry name" value="plsX"/>
    <property type="match status" value="1"/>
</dbReference>
<dbReference type="PANTHER" id="PTHR30100">
    <property type="entry name" value="FATTY ACID/PHOSPHOLIPID SYNTHESIS PROTEIN PLSX"/>
    <property type="match status" value="1"/>
</dbReference>
<dbReference type="PANTHER" id="PTHR30100:SF1">
    <property type="entry name" value="PHOSPHATE ACYLTRANSFERASE"/>
    <property type="match status" value="1"/>
</dbReference>
<dbReference type="Pfam" id="PF02504">
    <property type="entry name" value="FA_synthesis"/>
    <property type="match status" value="1"/>
</dbReference>
<dbReference type="PIRSF" id="PIRSF002465">
    <property type="entry name" value="Phsphlp_syn_PlsX"/>
    <property type="match status" value="1"/>
</dbReference>
<dbReference type="SUPFAM" id="SSF53659">
    <property type="entry name" value="Isocitrate/Isopropylmalate dehydrogenase-like"/>
    <property type="match status" value="1"/>
</dbReference>
<protein>
    <recommendedName>
        <fullName evidence="1">Phosphate acyltransferase</fullName>
        <ecNumber evidence="1">2.3.1.274</ecNumber>
    </recommendedName>
    <alternativeName>
        <fullName evidence="1">Acyl-ACP phosphotransacylase</fullName>
    </alternativeName>
    <alternativeName>
        <fullName evidence="1">Acyl-[acyl-carrier-protein]--phosphate acyltransferase</fullName>
    </alternativeName>
    <alternativeName>
        <fullName evidence="1">Phosphate-acyl-ACP acyltransferase</fullName>
    </alternativeName>
</protein>
<gene>
    <name evidence="1" type="primary">plsX</name>
    <name type="ordered locus">Rleg2_1196</name>
</gene>
<keyword id="KW-0963">Cytoplasm</keyword>
<keyword id="KW-0444">Lipid biosynthesis</keyword>
<keyword id="KW-0443">Lipid metabolism</keyword>
<keyword id="KW-0594">Phospholipid biosynthesis</keyword>
<keyword id="KW-1208">Phospholipid metabolism</keyword>
<keyword id="KW-1185">Reference proteome</keyword>
<keyword id="KW-0808">Transferase</keyword>
<accession>B5ZXV7</accession>
<reference key="1">
    <citation type="journal article" date="2010" name="Stand. Genomic Sci.">
        <title>Complete genome sequence of Rhizobium leguminosarum bv trifolii strain WSM2304, an effective microsymbiont of the South American clover Trifolium polymorphum.</title>
        <authorList>
            <person name="Reeve W."/>
            <person name="O'Hara G."/>
            <person name="Chain P."/>
            <person name="Ardley J."/>
            <person name="Brau L."/>
            <person name="Nandesena K."/>
            <person name="Tiwari R."/>
            <person name="Malfatti S."/>
            <person name="Kiss H."/>
            <person name="Lapidus A."/>
            <person name="Copeland A."/>
            <person name="Nolan M."/>
            <person name="Land M."/>
            <person name="Ivanova N."/>
            <person name="Mavromatis K."/>
            <person name="Markowitz V."/>
            <person name="Kyrpides N."/>
            <person name="Melino V."/>
            <person name="Denton M."/>
            <person name="Yates R."/>
            <person name="Howieson J."/>
        </authorList>
    </citation>
    <scope>NUCLEOTIDE SEQUENCE [LARGE SCALE GENOMIC DNA]</scope>
    <source>
        <strain>WSM2304</strain>
    </source>
</reference>
<proteinExistence type="inferred from homology"/>
<organism>
    <name type="scientific">Rhizobium leguminosarum bv. trifolii (strain WSM2304)</name>
    <dbReference type="NCBI Taxonomy" id="395492"/>
    <lineage>
        <taxon>Bacteria</taxon>
        <taxon>Pseudomonadati</taxon>
        <taxon>Pseudomonadota</taxon>
        <taxon>Alphaproteobacteria</taxon>
        <taxon>Hyphomicrobiales</taxon>
        <taxon>Rhizobiaceae</taxon>
        <taxon>Rhizobium/Agrobacterium group</taxon>
        <taxon>Rhizobium</taxon>
    </lineage>
</organism>
<comment type="function">
    <text evidence="1">Catalyzes the reversible formation of acyl-phosphate (acyl-PO(4)) from acyl-[acyl-carrier-protein] (acyl-ACP). This enzyme utilizes acyl-ACP as fatty acyl donor, but not acyl-CoA.</text>
</comment>
<comment type="catalytic activity">
    <reaction evidence="1">
        <text>a fatty acyl-[ACP] + phosphate = an acyl phosphate + holo-[ACP]</text>
        <dbReference type="Rhea" id="RHEA:42292"/>
        <dbReference type="Rhea" id="RHEA-COMP:9685"/>
        <dbReference type="Rhea" id="RHEA-COMP:14125"/>
        <dbReference type="ChEBI" id="CHEBI:43474"/>
        <dbReference type="ChEBI" id="CHEBI:59918"/>
        <dbReference type="ChEBI" id="CHEBI:64479"/>
        <dbReference type="ChEBI" id="CHEBI:138651"/>
        <dbReference type="EC" id="2.3.1.274"/>
    </reaction>
</comment>
<comment type="pathway">
    <text evidence="1">Lipid metabolism; phospholipid metabolism.</text>
</comment>
<comment type="subunit">
    <text evidence="1">Homodimer. Probably interacts with PlsY.</text>
</comment>
<comment type="subcellular location">
    <subcellularLocation>
        <location evidence="1">Cytoplasm</location>
    </subcellularLocation>
    <text evidence="1">Associated with the membrane possibly through PlsY.</text>
</comment>
<comment type="similarity">
    <text evidence="1">Belongs to the PlsX family.</text>
</comment>
<name>PLSX_RHILW</name>
<evidence type="ECO:0000255" key="1">
    <source>
        <dbReference type="HAMAP-Rule" id="MF_00019"/>
    </source>
</evidence>